<name>RSMF_ECOLI</name>
<protein>
    <recommendedName>
        <fullName>Ribosomal RNA small subunit methyltransferase F</fullName>
        <ecNumber>2.1.1.178</ecNumber>
    </recommendedName>
    <alternativeName>
        <fullName>16S rRNA m5C1407 methyltransferase</fullName>
    </alternativeName>
    <alternativeName>
        <fullName>rRNA (cytosine-C(5)-)-methyltransferase RsmF</fullName>
    </alternativeName>
</protein>
<keyword id="KW-0002">3D-structure</keyword>
<keyword id="KW-0963">Cytoplasm</keyword>
<keyword id="KW-0489">Methyltransferase</keyword>
<keyword id="KW-1185">Reference proteome</keyword>
<keyword id="KW-0694">RNA-binding</keyword>
<keyword id="KW-0698">rRNA processing</keyword>
<keyword id="KW-0949">S-adenosyl-L-methionine</keyword>
<keyword id="KW-0808">Transferase</keyword>
<feature type="chain" id="PRO_0000211822" description="Ribosomal RNA small subunit methyltransferase F">
    <location>
        <begin position="1"/>
        <end position="479"/>
    </location>
</feature>
<feature type="active site" description="Nucleophile" evidence="1">
    <location>
        <position position="247"/>
    </location>
</feature>
<feature type="binding site" evidence="1">
    <location>
        <begin position="125"/>
        <end position="131"/>
    </location>
    <ligand>
        <name>S-adenosyl-L-methionine</name>
        <dbReference type="ChEBI" id="CHEBI:59789"/>
    </ligand>
</feature>
<feature type="binding site" evidence="1">
    <location>
        <position position="149"/>
    </location>
    <ligand>
        <name>S-adenosyl-L-methionine</name>
        <dbReference type="ChEBI" id="CHEBI:59789"/>
    </ligand>
</feature>
<feature type="binding site" evidence="1">
    <location>
        <position position="176"/>
    </location>
    <ligand>
        <name>S-adenosyl-L-methionine</name>
        <dbReference type="ChEBI" id="CHEBI:59789"/>
    </ligand>
</feature>
<feature type="binding site" evidence="1">
    <location>
        <position position="194"/>
    </location>
    <ligand>
        <name>S-adenosyl-L-methionine</name>
        <dbReference type="ChEBI" id="CHEBI:59789"/>
    </ligand>
</feature>
<feature type="helix" evidence="5">
    <location>
        <begin position="10"/>
        <end position="16"/>
    </location>
</feature>
<feature type="helix" evidence="5">
    <location>
        <begin position="17"/>
        <end position="19"/>
    </location>
</feature>
<feature type="helix" evidence="5">
    <location>
        <begin position="27"/>
        <end position="33"/>
    </location>
</feature>
<feature type="strand" evidence="5">
    <location>
        <begin position="41"/>
        <end position="43"/>
    </location>
</feature>
<feature type="turn" evidence="5">
    <location>
        <begin position="45"/>
        <end position="47"/>
    </location>
</feature>
<feature type="helix" evidence="5">
    <location>
        <begin position="50"/>
        <end position="57"/>
    </location>
</feature>
<feature type="helix" evidence="5">
    <location>
        <begin position="58"/>
        <end position="60"/>
    </location>
</feature>
<feature type="strand" evidence="5">
    <location>
        <begin position="70"/>
        <end position="74"/>
    </location>
</feature>
<feature type="helix" evidence="5">
    <location>
        <begin position="86"/>
        <end position="88"/>
    </location>
</feature>
<feature type="helix" evidence="5">
    <location>
        <begin position="90"/>
        <end position="93"/>
    </location>
</feature>
<feature type="strand" evidence="5">
    <location>
        <begin position="96"/>
        <end position="99"/>
    </location>
</feature>
<feature type="helix" evidence="5">
    <location>
        <begin position="102"/>
        <end position="111"/>
    </location>
</feature>
<feature type="turn" evidence="5">
    <location>
        <begin position="112"/>
        <end position="115"/>
    </location>
</feature>
<feature type="strand" evidence="5">
    <location>
        <begin position="119"/>
        <end position="125"/>
    </location>
</feature>
<feature type="helix" evidence="5">
    <location>
        <begin position="130"/>
        <end position="138"/>
    </location>
</feature>
<feature type="turn" evidence="5">
    <location>
        <begin position="139"/>
        <end position="141"/>
    </location>
</feature>
<feature type="strand" evidence="5">
    <location>
        <begin position="143"/>
        <end position="148"/>
    </location>
</feature>
<feature type="helix" evidence="5">
    <location>
        <begin position="152"/>
        <end position="165"/>
    </location>
</feature>
<feature type="strand" evidence="5">
    <location>
        <begin position="169"/>
        <end position="173"/>
    </location>
</feature>
<feature type="helix" evidence="5">
    <location>
        <begin position="180"/>
        <end position="183"/>
    </location>
</feature>
<feature type="strand" evidence="5">
    <location>
        <begin position="188"/>
        <end position="194"/>
    </location>
</feature>
<feature type="helix" evidence="5">
    <location>
        <begin position="200"/>
        <end position="204"/>
    </location>
</feature>
<feature type="strand" evidence="5">
    <location>
        <begin position="209"/>
        <end position="212"/>
    </location>
</feature>
<feature type="helix" evidence="5">
    <location>
        <begin position="215"/>
        <end position="235"/>
    </location>
</feature>
<feature type="strand" evidence="5">
    <location>
        <begin position="236"/>
        <end position="247"/>
    </location>
</feature>
<feature type="turn" evidence="5">
    <location>
        <begin position="252"/>
        <end position="254"/>
    </location>
</feature>
<feature type="helix" evidence="5">
    <location>
        <begin position="255"/>
        <end position="264"/>
    </location>
</feature>
<feature type="turn" evidence="5">
    <location>
        <begin position="266"/>
        <end position="268"/>
    </location>
</feature>
<feature type="strand" evidence="5">
    <location>
        <begin position="269"/>
        <end position="271"/>
    </location>
</feature>
<feature type="helix" evidence="5">
    <location>
        <begin position="281"/>
        <end position="284"/>
    </location>
</feature>
<feature type="strand" evidence="5">
    <location>
        <begin position="291"/>
        <end position="293"/>
    </location>
</feature>
<feature type="turn" evidence="5">
    <location>
        <begin position="295"/>
        <end position="299"/>
    </location>
</feature>
<feature type="strand" evidence="5">
    <location>
        <begin position="303"/>
        <end position="310"/>
    </location>
</feature>
<feature type="helix" evidence="5">
    <location>
        <begin position="334"/>
        <end position="345"/>
    </location>
</feature>
<feature type="turn" evidence="5">
    <location>
        <begin position="346"/>
        <end position="348"/>
    </location>
</feature>
<feature type="strand" evidence="5">
    <location>
        <begin position="355"/>
        <end position="368"/>
    </location>
</feature>
<feature type="helix" evidence="5">
    <location>
        <begin position="369"/>
        <end position="374"/>
    </location>
</feature>
<feature type="strand" evidence="5">
    <location>
        <begin position="381"/>
        <end position="391"/>
    </location>
</feature>
<feature type="strand" evidence="5">
    <location>
        <begin position="394"/>
        <end position="397"/>
    </location>
</feature>
<feature type="helix" evidence="5">
    <location>
        <begin position="399"/>
        <end position="405"/>
    </location>
</feature>
<feature type="strand" evidence="5">
    <location>
        <begin position="408"/>
        <end position="415"/>
    </location>
</feature>
<feature type="helix" evidence="5">
    <location>
        <begin position="418"/>
        <end position="425"/>
    </location>
</feature>
<feature type="strand" evidence="5">
    <location>
        <begin position="439"/>
        <end position="445"/>
    </location>
</feature>
<feature type="strand" evidence="5">
    <location>
        <begin position="448"/>
        <end position="454"/>
    </location>
</feature>
<feature type="turn" evidence="5">
    <location>
        <begin position="456"/>
        <end position="459"/>
    </location>
</feature>
<feature type="helix" evidence="5">
    <location>
        <begin position="466"/>
        <end position="468"/>
    </location>
</feature>
<reference key="1">
    <citation type="journal article" date="1996" name="DNA Res.">
        <title>A 460-kb DNA sequence of the Escherichia coli K-12 genome corresponding to the 40.1-50.0 min region on the linkage map.</title>
        <authorList>
            <person name="Itoh T."/>
            <person name="Aiba H."/>
            <person name="Baba T."/>
            <person name="Fujita K."/>
            <person name="Hayashi K."/>
            <person name="Inada T."/>
            <person name="Isono K."/>
            <person name="Kasai H."/>
            <person name="Kimura S."/>
            <person name="Kitakawa M."/>
            <person name="Kitagawa M."/>
            <person name="Makino K."/>
            <person name="Miki T."/>
            <person name="Mizobuchi K."/>
            <person name="Mori H."/>
            <person name="Mori T."/>
            <person name="Motomura K."/>
            <person name="Nakade S."/>
            <person name="Nakamura Y."/>
            <person name="Nashimoto H."/>
            <person name="Nishio Y."/>
            <person name="Oshima T."/>
            <person name="Saito N."/>
            <person name="Sampei G."/>
            <person name="Seki Y."/>
            <person name="Sivasundaram S."/>
            <person name="Tagami H."/>
            <person name="Takeda J."/>
            <person name="Takemoto K."/>
            <person name="Wada C."/>
            <person name="Yamamoto Y."/>
            <person name="Horiuchi T."/>
        </authorList>
    </citation>
    <scope>NUCLEOTIDE SEQUENCE [LARGE SCALE GENOMIC DNA]</scope>
    <source>
        <strain>K12 / W3110 / ATCC 27325 / DSM 5911</strain>
    </source>
</reference>
<reference key="2">
    <citation type="journal article" date="1997" name="Science">
        <title>The complete genome sequence of Escherichia coli K-12.</title>
        <authorList>
            <person name="Blattner F.R."/>
            <person name="Plunkett G. III"/>
            <person name="Bloch C.A."/>
            <person name="Perna N.T."/>
            <person name="Burland V."/>
            <person name="Riley M."/>
            <person name="Collado-Vides J."/>
            <person name="Glasner J.D."/>
            <person name="Rode C.K."/>
            <person name="Mayhew G.F."/>
            <person name="Gregor J."/>
            <person name="Davis N.W."/>
            <person name="Kirkpatrick H.A."/>
            <person name="Goeden M.A."/>
            <person name="Rose D.J."/>
            <person name="Mau B."/>
            <person name="Shao Y."/>
        </authorList>
    </citation>
    <scope>NUCLEOTIDE SEQUENCE [LARGE SCALE GENOMIC DNA]</scope>
    <source>
        <strain>K12 / MG1655 / ATCC 47076</strain>
    </source>
</reference>
<reference key="3">
    <citation type="journal article" date="2006" name="Mol. Syst. Biol.">
        <title>Highly accurate genome sequences of Escherichia coli K-12 strains MG1655 and W3110.</title>
        <authorList>
            <person name="Hayashi K."/>
            <person name="Morooka N."/>
            <person name="Yamamoto Y."/>
            <person name="Fujita K."/>
            <person name="Isono K."/>
            <person name="Choi S."/>
            <person name="Ohtsubo E."/>
            <person name="Baba T."/>
            <person name="Wanner B.L."/>
            <person name="Mori H."/>
            <person name="Horiuchi T."/>
        </authorList>
    </citation>
    <scope>NUCLEOTIDE SEQUENCE [LARGE SCALE GENOMIC DNA]</scope>
    <source>
        <strain>K12 / W3110 / ATCC 27325 / DSM 5911</strain>
    </source>
</reference>
<reference key="4">
    <citation type="journal article" date="2006" name="J. Mol. Biol.">
        <title>YebU is a m5C methyltransferase specific for 16 S rRNA nucleotide 1407.</title>
        <authorList>
            <person name="Moeller Andersen N."/>
            <person name="Douthwaite S."/>
        </authorList>
    </citation>
    <scope>FUNCTION</scope>
    <scope>CATALYTIC ACTIVITY</scope>
</reference>
<reference key="5">
    <citation type="journal article" date="2006" name="J. Mol. Biol.">
        <title>The structure of the RNA m5C methyltransferase YebU from Escherichia coli reveals a C-terminal RNA-recruiting PUA domain.</title>
        <authorList>
            <person name="Hallberg B.M."/>
            <person name="Ericsson U.B."/>
            <person name="Johnson K.A."/>
            <person name="Moeller Andersen N."/>
            <person name="Douthwaite S."/>
            <person name="Nordlund P."/>
            <person name="Beuscher A.E. IV"/>
            <person name="Erlandsen H."/>
        </authorList>
    </citation>
    <scope>X-RAY CRYSTALLOGRAPHY (2.9 ANGSTROMS)</scope>
    <scope>CATALYTIC ACTIVITY</scope>
</reference>
<evidence type="ECO:0000250" key="1"/>
<evidence type="ECO:0000269" key="2">
    <source>
    </source>
</evidence>
<evidence type="ECO:0000269" key="3">
    <source>
    </source>
</evidence>
<evidence type="ECO:0000305" key="4"/>
<evidence type="ECO:0007829" key="5">
    <source>
        <dbReference type="PDB" id="2FRX"/>
    </source>
</evidence>
<dbReference type="EC" id="2.1.1.178"/>
<dbReference type="EMBL" id="U00096">
    <property type="protein sequence ID" value="AAC74905.2"/>
    <property type="molecule type" value="Genomic_DNA"/>
</dbReference>
<dbReference type="EMBL" id="AP009048">
    <property type="protein sequence ID" value="BAA15648.2"/>
    <property type="molecule type" value="Genomic_DNA"/>
</dbReference>
<dbReference type="PIR" id="C64945">
    <property type="entry name" value="C64945"/>
</dbReference>
<dbReference type="RefSeq" id="NP_416349.2">
    <property type="nucleotide sequence ID" value="NC_000913.3"/>
</dbReference>
<dbReference type="RefSeq" id="WP_001352260.1">
    <property type="nucleotide sequence ID" value="NZ_SSZK01000001.1"/>
</dbReference>
<dbReference type="PDB" id="2FRX">
    <property type="method" value="X-ray"/>
    <property type="resolution" value="2.90 A"/>
    <property type="chains" value="A/B/C/D=1-479"/>
</dbReference>
<dbReference type="PDBsum" id="2FRX"/>
<dbReference type="SMR" id="P76273"/>
<dbReference type="BioGRID" id="4259158">
    <property type="interactions" value="29"/>
</dbReference>
<dbReference type="FunCoup" id="P76273">
    <property type="interactions" value="212"/>
</dbReference>
<dbReference type="STRING" id="511145.b1835"/>
<dbReference type="PaxDb" id="511145-b1835"/>
<dbReference type="EnsemblBacteria" id="AAC74905">
    <property type="protein sequence ID" value="AAC74905"/>
    <property type="gene ID" value="b1835"/>
</dbReference>
<dbReference type="GeneID" id="946348"/>
<dbReference type="KEGG" id="ecj:JW5301"/>
<dbReference type="KEGG" id="eco:b1835"/>
<dbReference type="KEGG" id="ecoc:C3026_10455"/>
<dbReference type="PATRIC" id="fig|511145.12.peg.1913"/>
<dbReference type="EchoBASE" id="EB3777"/>
<dbReference type="eggNOG" id="COG0144">
    <property type="taxonomic scope" value="Bacteria"/>
</dbReference>
<dbReference type="eggNOG" id="COG3270">
    <property type="taxonomic scope" value="Bacteria"/>
</dbReference>
<dbReference type="HOGENOM" id="CLU_005316_6_2_6"/>
<dbReference type="InParanoid" id="P76273"/>
<dbReference type="OMA" id="EGMFRKN"/>
<dbReference type="OrthoDB" id="9810297at2"/>
<dbReference type="PhylomeDB" id="P76273"/>
<dbReference type="BioCyc" id="EcoCyc:G7008-MONOMER"/>
<dbReference type="BioCyc" id="MetaCyc:G7008-MONOMER"/>
<dbReference type="BRENDA" id="2.1.1.178">
    <property type="organism ID" value="2026"/>
</dbReference>
<dbReference type="EvolutionaryTrace" id="P76273"/>
<dbReference type="PRO" id="PR:P76273"/>
<dbReference type="Proteomes" id="UP000000625">
    <property type="component" value="Chromosome"/>
</dbReference>
<dbReference type="GO" id="GO:0005737">
    <property type="term" value="C:cytoplasm"/>
    <property type="evidence" value="ECO:0007669"/>
    <property type="project" value="UniProtKB-SubCell"/>
</dbReference>
<dbReference type="GO" id="GO:0003723">
    <property type="term" value="F:RNA binding"/>
    <property type="evidence" value="ECO:0007669"/>
    <property type="project" value="UniProtKB-KW"/>
</dbReference>
<dbReference type="GO" id="GO:0009383">
    <property type="term" value="F:rRNA (cytosine-C5-)-methyltransferase activity"/>
    <property type="evidence" value="ECO:0000314"/>
    <property type="project" value="EcoCyc"/>
</dbReference>
<dbReference type="GO" id="GO:0070475">
    <property type="term" value="P:rRNA base methylation"/>
    <property type="evidence" value="ECO:0000315"/>
    <property type="project" value="EcoCyc"/>
</dbReference>
<dbReference type="CDD" id="cd02440">
    <property type="entry name" value="AdoMet_MTases"/>
    <property type="match status" value="1"/>
</dbReference>
<dbReference type="FunFam" id="3.10.450.720:FF:000001">
    <property type="entry name" value="Ribosomal RNA small subunit methyltransferase F"/>
    <property type="match status" value="1"/>
</dbReference>
<dbReference type="FunFam" id="3.40.50.150:FF:000079">
    <property type="entry name" value="Ribosomal RNA small subunit methyltransferase F"/>
    <property type="match status" value="1"/>
</dbReference>
<dbReference type="Gene3D" id="3.10.450.720">
    <property type="match status" value="1"/>
</dbReference>
<dbReference type="Gene3D" id="3.40.50.150">
    <property type="entry name" value="Vaccinia Virus protein VP39"/>
    <property type="match status" value="1"/>
</dbReference>
<dbReference type="HAMAP" id="MF_01579">
    <property type="entry name" value="16SrRNA_methyltr_F"/>
    <property type="match status" value="1"/>
</dbReference>
<dbReference type="InterPro" id="IPR031341">
    <property type="entry name" value="Methyltr_RsmF_N"/>
</dbReference>
<dbReference type="InterPro" id="IPR049560">
    <property type="entry name" value="MeTrfase_RsmB-F_NOP2_cat"/>
</dbReference>
<dbReference type="InterPro" id="IPR001678">
    <property type="entry name" value="MeTrfase_RsmB-F_NOP2_dom"/>
</dbReference>
<dbReference type="InterPro" id="IPR027391">
    <property type="entry name" value="Nol1_Nop2_Fmu_2"/>
</dbReference>
<dbReference type="InterPro" id="IPR011023">
    <property type="entry name" value="Nop2p"/>
</dbReference>
<dbReference type="InterPro" id="IPR023267">
    <property type="entry name" value="RCMT"/>
</dbReference>
<dbReference type="InterPro" id="IPR023545">
    <property type="entry name" value="rRNA_ssu_MeTfrase_F"/>
</dbReference>
<dbReference type="InterPro" id="IPR018314">
    <property type="entry name" value="RsmB/NOL1/NOP2-like_CS"/>
</dbReference>
<dbReference type="InterPro" id="IPR029063">
    <property type="entry name" value="SAM-dependent_MTases_sf"/>
</dbReference>
<dbReference type="InterPro" id="IPR048457">
    <property type="entry name" value="YebU_pre-PUA_dom"/>
</dbReference>
<dbReference type="NCBIfam" id="TIGR00446">
    <property type="entry name" value="nop2p"/>
    <property type="match status" value="1"/>
</dbReference>
<dbReference type="NCBIfam" id="NF008898">
    <property type="entry name" value="PRK11933.1"/>
    <property type="match status" value="1"/>
</dbReference>
<dbReference type="PANTHER" id="PTHR22807:SF30">
    <property type="entry name" value="28S RRNA (CYTOSINE(4447)-C(5))-METHYLTRANSFERASE-RELATED"/>
    <property type="match status" value="1"/>
</dbReference>
<dbReference type="PANTHER" id="PTHR22807">
    <property type="entry name" value="NOP2 YEAST -RELATED NOL1/NOP2/FMU SUN DOMAIN-CONTAINING"/>
    <property type="match status" value="1"/>
</dbReference>
<dbReference type="Pfam" id="PF01189">
    <property type="entry name" value="Methyltr_RsmB-F"/>
    <property type="match status" value="1"/>
</dbReference>
<dbReference type="Pfam" id="PF17125">
    <property type="entry name" value="Methyltr_RsmF_N"/>
    <property type="match status" value="1"/>
</dbReference>
<dbReference type="Pfam" id="PF13636">
    <property type="entry name" value="Methyltranf_PUA"/>
    <property type="match status" value="1"/>
</dbReference>
<dbReference type="Pfam" id="PF21150">
    <property type="entry name" value="YebU_pre-PUA_dom"/>
    <property type="match status" value="1"/>
</dbReference>
<dbReference type="PRINTS" id="PR02008">
    <property type="entry name" value="RCMTFAMILY"/>
</dbReference>
<dbReference type="SUPFAM" id="SSF53335">
    <property type="entry name" value="S-adenosyl-L-methionine-dependent methyltransferases"/>
    <property type="match status" value="1"/>
</dbReference>
<dbReference type="PROSITE" id="PS01153">
    <property type="entry name" value="NOL1_NOP2_SUN"/>
    <property type="match status" value="1"/>
</dbReference>
<dbReference type="PROSITE" id="PS51686">
    <property type="entry name" value="SAM_MT_RSMB_NOP"/>
    <property type="match status" value="1"/>
</dbReference>
<accession>P76273</accession>
<accession>O07980</accession>
<gene>
    <name type="primary">rsmF</name>
    <name type="synonym">yebU</name>
    <name type="ordered locus">b1835</name>
    <name type="ordered locus">JW5301</name>
</gene>
<comment type="function">
    <text evidence="2">Specifically methylates the cytosine at position 1407 (m5C1407) of 16S rRNA.</text>
</comment>
<comment type="catalytic activity">
    <reaction evidence="2 3">
        <text>cytidine(1407) in 16S rRNA + S-adenosyl-L-methionine = 5-methylcytidine(1407) in 16S rRNA + S-adenosyl-L-homocysteine + H(+)</text>
        <dbReference type="Rhea" id="RHEA:42756"/>
        <dbReference type="Rhea" id="RHEA-COMP:10223"/>
        <dbReference type="Rhea" id="RHEA-COMP:10224"/>
        <dbReference type="ChEBI" id="CHEBI:15378"/>
        <dbReference type="ChEBI" id="CHEBI:57856"/>
        <dbReference type="ChEBI" id="CHEBI:59789"/>
        <dbReference type="ChEBI" id="CHEBI:74483"/>
        <dbReference type="ChEBI" id="CHEBI:82748"/>
        <dbReference type="EC" id="2.1.1.178"/>
    </reaction>
</comment>
<comment type="subcellular location">
    <subcellularLocation>
        <location evidence="4">Cytoplasm</location>
    </subcellularLocation>
</comment>
<comment type="similarity">
    <text evidence="4">Belongs to the class I-like SAM-binding methyltransferase superfamily. RsmB/NOP family.</text>
</comment>
<proteinExistence type="evidence at protein level"/>
<organism>
    <name type="scientific">Escherichia coli (strain K12)</name>
    <dbReference type="NCBI Taxonomy" id="83333"/>
    <lineage>
        <taxon>Bacteria</taxon>
        <taxon>Pseudomonadati</taxon>
        <taxon>Pseudomonadota</taxon>
        <taxon>Gammaproteobacteria</taxon>
        <taxon>Enterobacterales</taxon>
        <taxon>Enterobacteriaceae</taxon>
        <taxon>Escherichia</taxon>
    </lineage>
</organism>
<sequence length="479" mass="53228">MAQHTVYFPDAFLTQMREAMPSTLSFDDFLAACQRPLRRSIRVNTLKISVADFLQLTAPYGWTLTPIPWCEEGFWIERDNEDALPLGSTAEHLSGLFYIQEASSMLPVAALFADGNAPQRVMDVAAAPGSKTTQISARMNNEGAILANEFSASRVKVLHANISRCGISNVALTHFDGRVFGAAVPEMFDAILLDAPCSGEGVVRKDPDALKNWSPESNQEIAATQRELIDSAFHALRPGGTLVYSTCTLNQEENEAVCLWLKETYPDAVEFLPLGDLFPGANKALTEEGFLHVFPQIYDCEGFFVARLRKTQAIPALPAPKYKVGNFPFSPVKDREAGQIRQAATGVGLNWDENLRLWQRDKELWLFPVGIEALIGKVRFSRLGIKLAETHNKGYRWQHEAVIALASPDNMNAFELTPQEAEEWYRGRDVYPQAAPVADDVLVTFQHQPIGLAKRIGSRLKNSYPRELVRDGKLFTGNA</sequence>